<name>LUXS_PECAS</name>
<feature type="chain" id="PRO_0000172224" description="S-ribosylhomocysteine lyase">
    <location>
        <begin position="1"/>
        <end position="171"/>
    </location>
</feature>
<feature type="binding site" evidence="1">
    <location>
        <position position="54"/>
    </location>
    <ligand>
        <name>Fe cation</name>
        <dbReference type="ChEBI" id="CHEBI:24875"/>
    </ligand>
</feature>
<feature type="binding site" evidence="1">
    <location>
        <position position="58"/>
    </location>
    <ligand>
        <name>Fe cation</name>
        <dbReference type="ChEBI" id="CHEBI:24875"/>
    </ligand>
</feature>
<feature type="binding site" evidence="1">
    <location>
        <position position="128"/>
    </location>
    <ligand>
        <name>Fe cation</name>
        <dbReference type="ChEBI" id="CHEBI:24875"/>
    </ligand>
</feature>
<keyword id="KW-0071">Autoinducer synthesis</keyword>
<keyword id="KW-0408">Iron</keyword>
<keyword id="KW-0456">Lyase</keyword>
<keyword id="KW-0479">Metal-binding</keyword>
<keyword id="KW-0673">Quorum sensing</keyword>
<keyword id="KW-1185">Reference proteome</keyword>
<organism>
    <name type="scientific">Pectobacterium atrosepticum (strain SCRI 1043 / ATCC BAA-672)</name>
    <name type="common">Erwinia carotovora subsp. atroseptica</name>
    <dbReference type="NCBI Taxonomy" id="218491"/>
    <lineage>
        <taxon>Bacteria</taxon>
        <taxon>Pseudomonadati</taxon>
        <taxon>Pseudomonadota</taxon>
        <taxon>Gammaproteobacteria</taxon>
        <taxon>Enterobacterales</taxon>
        <taxon>Pectobacteriaceae</taxon>
        <taxon>Pectobacterium</taxon>
    </lineage>
</organism>
<evidence type="ECO:0000255" key="1">
    <source>
        <dbReference type="HAMAP-Rule" id="MF_00091"/>
    </source>
</evidence>
<comment type="function">
    <text evidence="1">Involved in the synthesis of autoinducer 2 (AI-2) which is secreted by bacteria and is used to communicate both the cell density and the metabolic potential of the environment. The regulation of gene expression in response to changes in cell density is called quorum sensing. Catalyzes the transformation of S-ribosylhomocysteine (RHC) to homocysteine (HC) and 4,5-dihydroxy-2,3-pentadione (DPD).</text>
</comment>
<comment type="catalytic activity">
    <reaction evidence="1">
        <text>S-(5-deoxy-D-ribos-5-yl)-L-homocysteine = (S)-4,5-dihydroxypentane-2,3-dione + L-homocysteine</text>
        <dbReference type="Rhea" id="RHEA:17753"/>
        <dbReference type="ChEBI" id="CHEBI:29484"/>
        <dbReference type="ChEBI" id="CHEBI:58195"/>
        <dbReference type="ChEBI" id="CHEBI:58199"/>
        <dbReference type="EC" id="4.4.1.21"/>
    </reaction>
</comment>
<comment type="cofactor">
    <cofactor evidence="1">
        <name>Fe cation</name>
        <dbReference type="ChEBI" id="CHEBI:24875"/>
    </cofactor>
    <text evidence="1">Binds 1 Fe cation per subunit.</text>
</comment>
<comment type="subunit">
    <text evidence="1">Homodimer.</text>
</comment>
<comment type="similarity">
    <text evidence="1">Belongs to the LuxS family.</text>
</comment>
<dbReference type="EC" id="4.4.1.21" evidence="1"/>
<dbReference type="EMBL" id="BX950851">
    <property type="protein sequence ID" value="CAG76260.1"/>
    <property type="molecule type" value="Genomic_DNA"/>
</dbReference>
<dbReference type="RefSeq" id="WP_011094875.1">
    <property type="nucleotide sequence ID" value="NC_004547.2"/>
</dbReference>
<dbReference type="SMR" id="Q6D1T5"/>
<dbReference type="STRING" id="218491.ECA3362"/>
<dbReference type="KEGG" id="eca:ECA3362"/>
<dbReference type="PATRIC" id="fig|218491.5.peg.3414"/>
<dbReference type="eggNOG" id="COG1854">
    <property type="taxonomic scope" value="Bacteria"/>
</dbReference>
<dbReference type="HOGENOM" id="CLU_107531_2_0_6"/>
<dbReference type="OrthoDB" id="9788129at2"/>
<dbReference type="Proteomes" id="UP000007966">
    <property type="component" value="Chromosome"/>
</dbReference>
<dbReference type="GO" id="GO:0005506">
    <property type="term" value="F:iron ion binding"/>
    <property type="evidence" value="ECO:0007669"/>
    <property type="project" value="InterPro"/>
</dbReference>
<dbReference type="GO" id="GO:0043768">
    <property type="term" value="F:S-ribosylhomocysteine lyase activity"/>
    <property type="evidence" value="ECO:0007669"/>
    <property type="project" value="UniProtKB-UniRule"/>
</dbReference>
<dbReference type="GO" id="GO:0009372">
    <property type="term" value="P:quorum sensing"/>
    <property type="evidence" value="ECO:0007669"/>
    <property type="project" value="UniProtKB-UniRule"/>
</dbReference>
<dbReference type="FunFam" id="3.30.1360.80:FF:000001">
    <property type="entry name" value="S-ribosylhomocysteine lyase"/>
    <property type="match status" value="1"/>
</dbReference>
<dbReference type="Gene3D" id="3.30.1360.80">
    <property type="entry name" value="S-ribosylhomocysteinase (LuxS)"/>
    <property type="match status" value="1"/>
</dbReference>
<dbReference type="HAMAP" id="MF_00091">
    <property type="entry name" value="LuxS"/>
    <property type="match status" value="1"/>
</dbReference>
<dbReference type="InterPro" id="IPR037005">
    <property type="entry name" value="LuxS_sf"/>
</dbReference>
<dbReference type="InterPro" id="IPR011249">
    <property type="entry name" value="Metalloenz_LuxS/M16"/>
</dbReference>
<dbReference type="InterPro" id="IPR003815">
    <property type="entry name" value="S-ribosylhomocysteinase"/>
</dbReference>
<dbReference type="NCBIfam" id="NF002602">
    <property type="entry name" value="PRK02260.1-2"/>
    <property type="match status" value="1"/>
</dbReference>
<dbReference type="PANTHER" id="PTHR35799">
    <property type="entry name" value="S-RIBOSYLHOMOCYSTEINE LYASE"/>
    <property type="match status" value="1"/>
</dbReference>
<dbReference type="PANTHER" id="PTHR35799:SF1">
    <property type="entry name" value="S-RIBOSYLHOMOCYSTEINE LYASE"/>
    <property type="match status" value="1"/>
</dbReference>
<dbReference type="Pfam" id="PF02664">
    <property type="entry name" value="LuxS"/>
    <property type="match status" value="1"/>
</dbReference>
<dbReference type="PIRSF" id="PIRSF006160">
    <property type="entry name" value="AI2"/>
    <property type="match status" value="1"/>
</dbReference>
<dbReference type="PRINTS" id="PR01487">
    <property type="entry name" value="LUXSPROTEIN"/>
</dbReference>
<dbReference type="SUPFAM" id="SSF63411">
    <property type="entry name" value="LuxS/MPP-like metallohydrolase"/>
    <property type="match status" value="1"/>
</dbReference>
<gene>
    <name evidence="1" type="primary">luxS</name>
    <name type="ordered locus">ECA3362</name>
</gene>
<protein>
    <recommendedName>
        <fullName evidence="1">S-ribosylhomocysteine lyase</fullName>
        <ecNumber evidence="1">4.4.1.21</ecNumber>
    </recommendedName>
    <alternativeName>
        <fullName evidence="1">AI-2 synthesis protein</fullName>
    </alternativeName>
    <alternativeName>
        <fullName evidence="1">Autoinducer-2 production protein LuxS</fullName>
    </alternativeName>
</protein>
<reference key="1">
    <citation type="journal article" date="2004" name="Proc. Natl. Acad. Sci. U.S.A.">
        <title>Genome sequence of the enterobacterial phytopathogen Erwinia carotovora subsp. atroseptica and characterization of virulence factors.</title>
        <authorList>
            <person name="Bell K.S."/>
            <person name="Sebaihia M."/>
            <person name="Pritchard L."/>
            <person name="Holden M.T.G."/>
            <person name="Hyman L.J."/>
            <person name="Holeva M.C."/>
            <person name="Thomson N.R."/>
            <person name="Bentley S.D."/>
            <person name="Churcher L.J.C."/>
            <person name="Mungall K."/>
            <person name="Atkin R."/>
            <person name="Bason N."/>
            <person name="Brooks K."/>
            <person name="Chillingworth T."/>
            <person name="Clark K."/>
            <person name="Doggett J."/>
            <person name="Fraser A."/>
            <person name="Hance Z."/>
            <person name="Hauser H."/>
            <person name="Jagels K."/>
            <person name="Moule S."/>
            <person name="Norbertczak H."/>
            <person name="Ormond D."/>
            <person name="Price C."/>
            <person name="Quail M.A."/>
            <person name="Sanders M."/>
            <person name="Walker D."/>
            <person name="Whitehead S."/>
            <person name="Salmond G.P.C."/>
            <person name="Birch P.R.J."/>
            <person name="Parkhill J."/>
            <person name="Toth I.K."/>
        </authorList>
    </citation>
    <scope>NUCLEOTIDE SEQUENCE [LARGE SCALE GENOMIC DNA]</scope>
    <source>
        <strain>SCRI 1043 / ATCC BAA-672</strain>
    </source>
</reference>
<proteinExistence type="inferred from homology"/>
<sequence length="171" mass="19325">MPLLDSFTVDHTRMAAPAVRVAKTMKTPHGDNITVFDLRFCRPNIEVMPERGIHTLEHLFAGFMRDHLNGDGVEIIDISPMGCRTGFYMSLIGTPDEQRVAESWKAAMSDVLKVTDQRKIPELNEYQCGTYDMHSLKEAQEIAQHIVDHDIGINQNDDLALPKDKLAELHI</sequence>
<accession>Q6D1T5</accession>